<proteinExistence type="inferred from homology"/>
<protein>
    <recommendedName>
        <fullName evidence="1">Secretion monitor</fullName>
    </recommendedName>
</protein>
<reference key="1">
    <citation type="journal article" date="2009" name="PLoS Genet.">
        <title>Organised genome dynamics in the Escherichia coli species results in highly diverse adaptive paths.</title>
        <authorList>
            <person name="Touchon M."/>
            <person name="Hoede C."/>
            <person name="Tenaillon O."/>
            <person name="Barbe V."/>
            <person name="Baeriswyl S."/>
            <person name="Bidet P."/>
            <person name="Bingen E."/>
            <person name="Bonacorsi S."/>
            <person name="Bouchier C."/>
            <person name="Bouvet O."/>
            <person name="Calteau A."/>
            <person name="Chiapello H."/>
            <person name="Clermont O."/>
            <person name="Cruveiller S."/>
            <person name="Danchin A."/>
            <person name="Diard M."/>
            <person name="Dossat C."/>
            <person name="Karoui M.E."/>
            <person name="Frapy E."/>
            <person name="Garry L."/>
            <person name="Ghigo J.M."/>
            <person name="Gilles A.M."/>
            <person name="Johnson J."/>
            <person name="Le Bouguenec C."/>
            <person name="Lescat M."/>
            <person name="Mangenot S."/>
            <person name="Martinez-Jehanne V."/>
            <person name="Matic I."/>
            <person name="Nassif X."/>
            <person name="Oztas S."/>
            <person name="Petit M.A."/>
            <person name="Pichon C."/>
            <person name="Rouy Z."/>
            <person name="Ruf C.S."/>
            <person name="Schneider D."/>
            <person name="Tourret J."/>
            <person name="Vacherie B."/>
            <person name="Vallenet D."/>
            <person name="Medigue C."/>
            <person name="Rocha E.P.C."/>
            <person name="Denamur E."/>
        </authorList>
    </citation>
    <scope>NUCLEOTIDE SEQUENCE [LARGE SCALE GENOMIC DNA]</scope>
    <source>
        <strain>UMN026 / ExPEC</strain>
    </source>
</reference>
<name>SECM_ECOLU</name>
<keyword id="KW-0963">Cytoplasm</keyword>
<keyword id="KW-0574">Periplasm</keyword>
<keyword id="KW-0732">Signal</keyword>
<gene>
    <name evidence="1" type="primary">secM</name>
    <name type="ordered locus">ECUMN_0097</name>
</gene>
<organism>
    <name type="scientific">Escherichia coli O17:K52:H18 (strain UMN026 / ExPEC)</name>
    <dbReference type="NCBI Taxonomy" id="585056"/>
    <lineage>
        <taxon>Bacteria</taxon>
        <taxon>Pseudomonadati</taxon>
        <taxon>Pseudomonadota</taxon>
        <taxon>Gammaproteobacteria</taxon>
        <taxon>Enterobacterales</taxon>
        <taxon>Enterobacteriaceae</taxon>
        <taxon>Escherichia</taxon>
    </lineage>
</organism>
<accession>B7N7X0</accession>
<comment type="function">
    <text evidence="1">Regulates secA expression by translational coupling of the secM secA operon. Translational pausing at a specific Pro residue 5 residues before the end of the protein may allow disruption of a mRNA repressor helix that normally suppresses secA translation initiation.</text>
</comment>
<comment type="subcellular location">
    <subcellularLocation>
        <location evidence="1">Cytoplasm</location>
        <location evidence="1">Cytosol</location>
    </subcellularLocation>
    <subcellularLocation>
        <location evidence="1">Periplasm</location>
    </subcellularLocation>
    <text evidence="1">The active form is cytosolic, while the periplasmic form is rapidly degraded, mainly by the tail-specific protease.</text>
</comment>
<comment type="similarity">
    <text evidence="1">Belongs to the SecM family.</text>
</comment>
<sequence>MSGILTRWRQFGKRYFWPHLLLGMVAASLGLPALSNAAEPNAPAKATTRNHEPSAKVNFGQLALLEANTRRPNSNYSVDYWHQHAIRTVIRHLSFAMAPQTLPVAEESLPLQAQHLALLDTLSALLTQEGTPSEKGYRIDYAHFTPQAKFSTPVWISQAQGIRAGPQRLS</sequence>
<feature type="signal peptide" evidence="1">
    <location>
        <begin position="1"/>
        <end position="37"/>
    </location>
</feature>
<feature type="chain" id="PRO_1000142338" description="Secretion monitor">
    <location>
        <begin position="38"/>
        <end position="170"/>
    </location>
</feature>
<evidence type="ECO:0000255" key="1">
    <source>
        <dbReference type="HAMAP-Rule" id="MF_01332"/>
    </source>
</evidence>
<dbReference type="EMBL" id="CU928163">
    <property type="protein sequence ID" value="CAR11320.1"/>
    <property type="molecule type" value="Genomic_DNA"/>
</dbReference>
<dbReference type="RefSeq" id="WP_000014320.1">
    <property type="nucleotide sequence ID" value="NC_011751.1"/>
</dbReference>
<dbReference type="RefSeq" id="YP_002410876.1">
    <property type="nucleotide sequence ID" value="NC_011751.1"/>
</dbReference>
<dbReference type="SMR" id="B7N7X0"/>
<dbReference type="STRING" id="585056.ECUMN_0097"/>
<dbReference type="GeneID" id="75169997"/>
<dbReference type="KEGG" id="eum:ECUMN_0097"/>
<dbReference type="PATRIC" id="fig|585056.7.peg.288"/>
<dbReference type="HOGENOM" id="CLU_108853_0_0_6"/>
<dbReference type="Proteomes" id="UP000007097">
    <property type="component" value="Chromosome"/>
</dbReference>
<dbReference type="GO" id="GO:0005829">
    <property type="term" value="C:cytosol"/>
    <property type="evidence" value="ECO:0007669"/>
    <property type="project" value="UniProtKB-SubCell"/>
</dbReference>
<dbReference type="GO" id="GO:0042597">
    <property type="term" value="C:periplasmic space"/>
    <property type="evidence" value="ECO:0007669"/>
    <property type="project" value="UniProtKB-SubCell"/>
</dbReference>
<dbReference type="GO" id="GO:0045182">
    <property type="term" value="F:translation regulator activity"/>
    <property type="evidence" value="ECO:0007669"/>
    <property type="project" value="InterPro"/>
</dbReference>
<dbReference type="HAMAP" id="MF_01332">
    <property type="entry name" value="SecM"/>
    <property type="match status" value="1"/>
</dbReference>
<dbReference type="InterPro" id="IPR009502">
    <property type="entry name" value="SecM"/>
</dbReference>
<dbReference type="NCBIfam" id="NF002799">
    <property type="entry name" value="PRK02943.1-1"/>
    <property type="match status" value="1"/>
</dbReference>
<dbReference type="Pfam" id="PF06558">
    <property type="entry name" value="SecM"/>
    <property type="match status" value="1"/>
</dbReference>
<dbReference type="PIRSF" id="PIRSF004572">
    <property type="entry name" value="SecM"/>
    <property type="match status" value="1"/>
</dbReference>